<accession>Q9PMD2</accession>
<accession>Q0P888</accession>
<sequence length="657" mass="73958">MLNQNNQELFKPSKEFSRNARIKNLCEYYDLCDEAKEDFEGFWKRQAFEKIEWFSPFSRVLNEDKAPFYKWFEGGTLNVSYQCLDRHMKTRRNKAALIFEGEMGDYEVYTYRRLLHETCKAANLLKKFGVKKGDRVVIYMPMIPETAIVMLACARIGAIHSVVFGGFSPEALRDRIIDAGAKLVVTADGAFRRGKPYMLKPAVDKALSEGCESVEKVLIVIRNNEPIEYIKGRDYVYNELVKNESYKCEPEIMDSEDLLFLLYTSGSTGKPKGVMHASAGYILWAQMTMEWVFDIKDYDNYWCSADVGWITGHTYVVYGPLACGATTIMHEGTPTYPNSGRWWRMIEEYQISKFYTSPTAIRMLHADAPNEPRKYDLSTLEVLGTVGEPINPSAWKWFYDEIGGTKSPIVDTWWQTETGGHMITPLPGATPLKPGCATLPLPGIFAEVIDEEGNKKDEGEDGLLCITKPWPSMIRGIWGNDERYIESYFSQAKKDGKAVYFSGDGAFYDKNGYITITGRTDDVVNVAGHRIGTAEIESAIAKHPSVAESAVVSILDTIKGESLFAFVVLSPASSCDLGGAIETLKELNDILRVEIGPIAKIEKILYTPGLPKTRSGKIMRRILRTIARGEEIKQDISTLEDSKVVETIVKLAKAEFE</sequence>
<reference key="1">
    <citation type="journal article" date="2000" name="Nature">
        <title>The genome sequence of the food-borne pathogen Campylobacter jejuni reveals hypervariable sequences.</title>
        <authorList>
            <person name="Parkhill J."/>
            <person name="Wren B.W."/>
            <person name="Mungall K.L."/>
            <person name="Ketley J.M."/>
            <person name="Churcher C.M."/>
            <person name="Basham D."/>
            <person name="Chillingworth T."/>
            <person name="Davies R.M."/>
            <person name="Feltwell T."/>
            <person name="Holroyd S."/>
            <person name="Jagels K."/>
            <person name="Karlyshev A.V."/>
            <person name="Moule S."/>
            <person name="Pallen M.J."/>
            <person name="Penn C.W."/>
            <person name="Quail M.A."/>
            <person name="Rajandream M.A."/>
            <person name="Rutherford K.M."/>
            <person name="van Vliet A.H.M."/>
            <person name="Whitehead S."/>
            <person name="Barrell B.G."/>
        </authorList>
    </citation>
    <scope>NUCLEOTIDE SEQUENCE [LARGE SCALE GENOMIC DNA]</scope>
    <source>
        <strain>ATCC 700819 / NCTC 11168</strain>
    </source>
</reference>
<feature type="chain" id="PRO_0000208358" description="Acetyl-coenzyme A synthetase">
    <location>
        <begin position="1"/>
        <end position="657"/>
    </location>
</feature>
<feature type="binding site" evidence="1">
    <location>
        <begin position="192"/>
        <end position="195"/>
    </location>
    <ligand>
        <name>CoA</name>
        <dbReference type="ChEBI" id="CHEBI:57287"/>
    </ligand>
</feature>
<feature type="binding site" evidence="1">
    <location>
        <position position="311"/>
    </location>
    <ligand>
        <name>CoA</name>
        <dbReference type="ChEBI" id="CHEBI:57287"/>
    </ligand>
</feature>
<feature type="binding site" evidence="1">
    <location>
        <begin position="387"/>
        <end position="389"/>
    </location>
    <ligand>
        <name>ATP</name>
        <dbReference type="ChEBI" id="CHEBI:30616"/>
    </ligand>
</feature>
<feature type="binding site" evidence="1">
    <location>
        <begin position="411"/>
        <end position="416"/>
    </location>
    <ligand>
        <name>ATP</name>
        <dbReference type="ChEBI" id="CHEBI:30616"/>
    </ligand>
</feature>
<feature type="binding site" evidence="1">
    <location>
        <position position="504"/>
    </location>
    <ligand>
        <name>ATP</name>
        <dbReference type="ChEBI" id="CHEBI:30616"/>
    </ligand>
</feature>
<feature type="binding site" evidence="1">
    <location>
        <position position="519"/>
    </location>
    <ligand>
        <name>ATP</name>
        <dbReference type="ChEBI" id="CHEBI:30616"/>
    </ligand>
</feature>
<feature type="binding site" evidence="1">
    <location>
        <position position="530"/>
    </location>
    <ligand>
        <name>ATP</name>
        <dbReference type="ChEBI" id="CHEBI:30616"/>
    </ligand>
</feature>
<feature type="binding site" evidence="1">
    <location>
        <position position="543"/>
    </location>
    <ligand>
        <name>Mg(2+)</name>
        <dbReference type="ChEBI" id="CHEBI:18420"/>
    </ligand>
</feature>
<feature type="binding site" evidence="1">
    <location>
        <position position="546"/>
    </location>
    <ligand>
        <name>Mg(2+)</name>
        <dbReference type="ChEBI" id="CHEBI:18420"/>
    </ligand>
</feature>
<feature type="binding site">
    <location>
        <position position="592"/>
    </location>
    <ligand>
        <name>CoA</name>
        <dbReference type="ChEBI" id="CHEBI:57287"/>
    </ligand>
</feature>
<feature type="modified residue" description="N6-acetyllysine" evidence="1">
    <location>
        <position position="617"/>
    </location>
</feature>
<proteinExistence type="inferred from homology"/>
<comment type="function">
    <text evidence="1">Catalyzes the conversion of acetate into acetyl-CoA (AcCoA), an essential intermediate at the junction of anabolic and catabolic pathways. AcsA undergoes a two-step reaction. In the first half reaction, AcsA combines acetate with ATP to form acetyl-adenylate (AcAMP) intermediate. In the second half reaction, it can then transfer the acetyl group from AcAMP to the sulfhydryl group of CoA, forming the product AcCoA.</text>
</comment>
<comment type="catalytic activity">
    <reaction evidence="1">
        <text>acetate + ATP + CoA = acetyl-CoA + AMP + diphosphate</text>
        <dbReference type="Rhea" id="RHEA:23176"/>
        <dbReference type="ChEBI" id="CHEBI:30089"/>
        <dbReference type="ChEBI" id="CHEBI:30616"/>
        <dbReference type="ChEBI" id="CHEBI:33019"/>
        <dbReference type="ChEBI" id="CHEBI:57287"/>
        <dbReference type="ChEBI" id="CHEBI:57288"/>
        <dbReference type="ChEBI" id="CHEBI:456215"/>
        <dbReference type="EC" id="6.2.1.1"/>
    </reaction>
</comment>
<comment type="cofactor">
    <cofactor evidence="1">
        <name>Mg(2+)</name>
        <dbReference type="ChEBI" id="CHEBI:18420"/>
    </cofactor>
</comment>
<comment type="PTM">
    <text evidence="1">Acetylated. Deacetylation by the SIR2-homolog deacetylase activates the enzyme.</text>
</comment>
<comment type="similarity">
    <text evidence="1">Belongs to the ATP-dependent AMP-binding enzyme family.</text>
</comment>
<name>ACSA_CAMJE</name>
<dbReference type="EC" id="6.2.1.1" evidence="1"/>
<dbReference type="EMBL" id="AL111168">
    <property type="protein sequence ID" value="CAL35637.1"/>
    <property type="molecule type" value="Genomic_DNA"/>
</dbReference>
<dbReference type="PIR" id="G81300">
    <property type="entry name" value="G81300"/>
</dbReference>
<dbReference type="RefSeq" id="WP_002851288.1">
    <property type="nucleotide sequence ID" value="NZ_SZUC01000003.1"/>
</dbReference>
<dbReference type="RefSeq" id="YP_002344909.1">
    <property type="nucleotide sequence ID" value="NC_002163.1"/>
</dbReference>
<dbReference type="SMR" id="Q9PMD2"/>
<dbReference type="IntAct" id="Q9PMD2">
    <property type="interactions" value="33"/>
</dbReference>
<dbReference type="STRING" id="192222.Cj1537c"/>
<dbReference type="PaxDb" id="192222-Cj1537c"/>
<dbReference type="EnsemblBacteria" id="CAL35637">
    <property type="protein sequence ID" value="CAL35637"/>
    <property type="gene ID" value="Cj1537c"/>
</dbReference>
<dbReference type="GeneID" id="905819"/>
<dbReference type="KEGG" id="cje:Cj1537c"/>
<dbReference type="PATRIC" id="fig|192222.6.peg.1514"/>
<dbReference type="eggNOG" id="COG0365">
    <property type="taxonomic scope" value="Bacteria"/>
</dbReference>
<dbReference type="HOGENOM" id="CLU_000022_3_6_7"/>
<dbReference type="OrthoDB" id="9765680at2"/>
<dbReference type="Proteomes" id="UP000000799">
    <property type="component" value="Chromosome"/>
</dbReference>
<dbReference type="GO" id="GO:0005829">
    <property type="term" value="C:cytosol"/>
    <property type="evidence" value="ECO:0007669"/>
    <property type="project" value="TreeGrafter"/>
</dbReference>
<dbReference type="GO" id="GO:0003987">
    <property type="term" value="F:acetate-CoA ligase activity"/>
    <property type="evidence" value="ECO:0007669"/>
    <property type="project" value="UniProtKB-UniRule"/>
</dbReference>
<dbReference type="GO" id="GO:0016208">
    <property type="term" value="F:AMP binding"/>
    <property type="evidence" value="ECO:0007669"/>
    <property type="project" value="InterPro"/>
</dbReference>
<dbReference type="GO" id="GO:0005524">
    <property type="term" value="F:ATP binding"/>
    <property type="evidence" value="ECO:0007669"/>
    <property type="project" value="UniProtKB-KW"/>
</dbReference>
<dbReference type="GO" id="GO:0046872">
    <property type="term" value="F:metal ion binding"/>
    <property type="evidence" value="ECO:0007669"/>
    <property type="project" value="UniProtKB-KW"/>
</dbReference>
<dbReference type="GO" id="GO:0019427">
    <property type="term" value="P:acetyl-CoA biosynthetic process from acetate"/>
    <property type="evidence" value="ECO:0007669"/>
    <property type="project" value="InterPro"/>
</dbReference>
<dbReference type="CDD" id="cd05966">
    <property type="entry name" value="ACS"/>
    <property type="match status" value="1"/>
</dbReference>
<dbReference type="FunFam" id="3.40.50.12780:FF:000001">
    <property type="entry name" value="Acetyl-coenzyme A synthetase"/>
    <property type="match status" value="1"/>
</dbReference>
<dbReference type="Gene3D" id="3.30.300.30">
    <property type="match status" value="1"/>
</dbReference>
<dbReference type="Gene3D" id="3.40.50.12780">
    <property type="entry name" value="N-terminal domain of ligase-like"/>
    <property type="match status" value="1"/>
</dbReference>
<dbReference type="HAMAP" id="MF_01123">
    <property type="entry name" value="Ac_CoA_synth"/>
    <property type="match status" value="1"/>
</dbReference>
<dbReference type="InterPro" id="IPR011904">
    <property type="entry name" value="Ac_CoA_lig"/>
</dbReference>
<dbReference type="InterPro" id="IPR032387">
    <property type="entry name" value="ACAS_N"/>
</dbReference>
<dbReference type="InterPro" id="IPR025110">
    <property type="entry name" value="AMP-bd_C"/>
</dbReference>
<dbReference type="InterPro" id="IPR045851">
    <property type="entry name" value="AMP-bd_C_sf"/>
</dbReference>
<dbReference type="InterPro" id="IPR020845">
    <property type="entry name" value="AMP-binding_CS"/>
</dbReference>
<dbReference type="InterPro" id="IPR000873">
    <property type="entry name" value="AMP-dep_synth/lig_dom"/>
</dbReference>
<dbReference type="InterPro" id="IPR042099">
    <property type="entry name" value="ANL_N_sf"/>
</dbReference>
<dbReference type="NCBIfam" id="TIGR02188">
    <property type="entry name" value="Ac_CoA_lig_AcsA"/>
    <property type="match status" value="1"/>
</dbReference>
<dbReference type="NCBIfam" id="NF001208">
    <property type="entry name" value="PRK00174.1"/>
    <property type="match status" value="1"/>
</dbReference>
<dbReference type="PANTHER" id="PTHR24095">
    <property type="entry name" value="ACETYL-COENZYME A SYNTHETASE"/>
    <property type="match status" value="1"/>
</dbReference>
<dbReference type="PANTHER" id="PTHR24095:SF14">
    <property type="entry name" value="ACETYL-COENZYME A SYNTHETASE 1"/>
    <property type="match status" value="1"/>
</dbReference>
<dbReference type="Pfam" id="PF16177">
    <property type="entry name" value="ACAS_N"/>
    <property type="match status" value="1"/>
</dbReference>
<dbReference type="Pfam" id="PF00501">
    <property type="entry name" value="AMP-binding"/>
    <property type="match status" value="1"/>
</dbReference>
<dbReference type="Pfam" id="PF13193">
    <property type="entry name" value="AMP-binding_C"/>
    <property type="match status" value="1"/>
</dbReference>
<dbReference type="SUPFAM" id="SSF56801">
    <property type="entry name" value="Acetyl-CoA synthetase-like"/>
    <property type="match status" value="1"/>
</dbReference>
<dbReference type="PROSITE" id="PS00455">
    <property type="entry name" value="AMP_BINDING"/>
    <property type="match status" value="1"/>
</dbReference>
<protein>
    <recommendedName>
        <fullName evidence="1">Acetyl-coenzyme A synthetase</fullName>
        <shortName evidence="1">AcCoA synthetase</shortName>
        <shortName evidence="1">Acs</shortName>
        <ecNumber evidence="1">6.2.1.1</ecNumber>
    </recommendedName>
    <alternativeName>
        <fullName evidence="1">Acetate--CoA ligase</fullName>
    </alternativeName>
    <alternativeName>
        <fullName evidence="1">Acyl-activating enzyme</fullName>
    </alternativeName>
</protein>
<gene>
    <name evidence="1" type="primary">acsA</name>
    <name type="synonym">acs</name>
    <name type="ordered locus">Cj1537c</name>
</gene>
<organism>
    <name type="scientific">Campylobacter jejuni subsp. jejuni serotype O:2 (strain ATCC 700819 / NCTC 11168)</name>
    <dbReference type="NCBI Taxonomy" id="192222"/>
    <lineage>
        <taxon>Bacteria</taxon>
        <taxon>Pseudomonadati</taxon>
        <taxon>Campylobacterota</taxon>
        <taxon>Epsilonproteobacteria</taxon>
        <taxon>Campylobacterales</taxon>
        <taxon>Campylobacteraceae</taxon>
        <taxon>Campylobacter</taxon>
    </lineage>
</organism>
<evidence type="ECO:0000255" key="1">
    <source>
        <dbReference type="HAMAP-Rule" id="MF_01123"/>
    </source>
</evidence>
<keyword id="KW-0007">Acetylation</keyword>
<keyword id="KW-0067">ATP-binding</keyword>
<keyword id="KW-0436">Ligase</keyword>
<keyword id="KW-0460">Magnesium</keyword>
<keyword id="KW-0479">Metal-binding</keyword>
<keyword id="KW-0547">Nucleotide-binding</keyword>
<keyword id="KW-1185">Reference proteome</keyword>